<dbReference type="EMBL" id="JQ177065">
    <property type="protein sequence ID" value="AFC22482.1"/>
    <property type="molecule type" value="Genomic_DNA"/>
</dbReference>
<dbReference type="RefSeq" id="YP_007006939.1">
    <property type="nucleotide sequence ID" value="NC_019522.1"/>
</dbReference>
<dbReference type="PDB" id="7B5J">
    <property type="method" value="X-ray"/>
    <property type="resolution" value="1.34 A"/>
    <property type="chains" value="A/B=2-116"/>
</dbReference>
<dbReference type="PDB" id="7VJO">
    <property type="method" value="X-ray"/>
    <property type="resolution" value="1.31 A"/>
    <property type="chains" value="A/B=1-116"/>
</dbReference>
<dbReference type="PDB" id="7VJP">
    <property type="method" value="X-ray"/>
    <property type="resolution" value="1.59 A"/>
    <property type="chains" value="A/B=1-116"/>
</dbReference>
<dbReference type="PDB" id="7VJQ">
    <property type="method" value="X-ray"/>
    <property type="resolution" value="2.79 A"/>
    <property type="chains" value="A/B=1-116"/>
</dbReference>
<dbReference type="PDB" id="8W35">
    <property type="method" value="EM"/>
    <property type="resolution" value="2.61 A"/>
    <property type="chains" value="A/B=1-116"/>
</dbReference>
<dbReference type="PDBsum" id="7B5J"/>
<dbReference type="PDBsum" id="7VJO"/>
<dbReference type="PDBsum" id="7VJP"/>
<dbReference type="PDBsum" id="7VJQ"/>
<dbReference type="PDBsum" id="8W35"/>
<dbReference type="EMDB" id="EMD-43762"/>
<dbReference type="SMR" id="H9C180"/>
<dbReference type="GeneID" id="14012446"/>
<dbReference type="KEGG" id="vg:14012446"/>
<dbReference type="Proteomes" id="UP000005230">
    <property type="component" value="Segment"/>
</dbReference>
<dbReference type="GO" id="GO:0003677">
    <property type="term" value="F:DNA binding"/>
    <property type="evidence" value="ECO:0007669"/>
    <property type="project" value="UniProtKB-KW"/>
</dbReference>
<dbReference type="GO" id="GO:0046872">
    <property type="term" value="F:metal ion binding"/>
    <property type="evidence" value="ECO:0007669"/>
    <property type="project" value="UniProtKB-KW"/>
</dbReference>
<dbReference type="GO" id="GO:0003723">
    <property type="term" value="F:RNA binding"/>
    <property type="evidence" value="ECO:0007669"/>
    <property type="project" value="UniProtKB-KW"/>
</dbReference>
<dbReference type="Gene3D" id="1.10.3100.10">
    <property type="entry name" value="Putative cytoplasmic protein"/>
    <property type="match status" value="1"/>
</dbReference>
<dbReference type="InterPro" id="IPR015060">
    <property type="entry name" value="Aca2_YdiL-like"/>
</dbReference>
<dbReference type="InterPro" id="IPR010982">
    <property type="entry name" value="Lambda_DNA-bd_dom_sf"/>
</dbReference>
<dbReference type="InterPro" id="IPR027910">
    <property type="entry name" value="YdiL_sf"/>
</dbReference>
<dbReference type="Pfam" id="PF08965">
    <property type="entry name" value="Aca2_YdiL"/>
    <property type="match status" value="1"/>
</dbReference>
<dbReference type="SUPFAM" id="SSF47413">
    <property type="entry name" value="lambda repressor-like DNA-binding domains"/>
    <property type="match status" value="1"/>
</dbReference>
<protein>
    <recommendedName>
        <fullName>Aca2 repressor</fullName>
    </recommendedName>
    <alternativeName>
        <fullName>Aca2 regulator</fullName>
    </alternativeName>
    <alternativeName>
        <fullName>Gene product 30</fullName>
        <shortName>Gp30</shortName>
    </alternativeName>
</protein>
<organismHost>
    <name type="scientific">Pectobacterium carotovorum</name>
    <name type="common">Erwinia carotovora</name>
    <dbReference type="NCBI Taxonomy" id="554"/>
</organismHost>
<reference key="1">
    <citation type="journal article" date="2012" name="PLoS ONE">
        <title>Phage morphology recapitulates phylogeny: the comparative genomics of a new group of myoviruses.</title>
        <authorList>
            <person name="Comeau A.M."/>
            <person name="Tremblay D."/>
            <person name="Moineau S."/>
            <person name="Rattei T."/>
            <person name="Kushkina A.I."/>
            <person name="Tovkach F.I."/>
            <person name="Krisch H.M."/>
            <person name="Ackermann H.W."/>
        </authorList>
    </citation>
    <scope>NUCLEOTIDE SEQUENCE [LARGE SCALE GENOMIC DNA]</scope>
</reference>
<reference key="2">
    <citation type="journal article" date="2019" name="Nucleic Acids Res.">
        <title>The autoregulator Aca2 mediates anti-CRISPR repression.</title>
        <authorList>
            <person name="Birkholz N."/>
            <person name="Fagerlund R.D."/>
            <person name="Smith L.M."/>
            <person name="Jackson S.A."/>
            <person name="Fineran P.C."/>
        </authorList>
    </citation>
    <scope>FUNCTION</scope>
    <scope>SUBUNIT</scope>
    <scope>DNA-BINDING</scope>
    <scope>DOMAIN</scope>
</reference>
<reference evidence="6 7" key="3">
    <citation type="journal article" date="2021" name="J. Biol. Chem.">
        <title>Structural basis for anti-CRISPR repression mediated by bacterial operon proteins Aca1 and Aca2.</title>
        <authorList>
            <person name="Liu Y."/>
            <person name="Zhang L."/>
            <person name="Guo M."/>
            <person name="Chen L."/>
            <person name="Wu B."/>
            <person name="Huang H."/>
        </authorList>
    </citation>
    <scope>X-RAY CRYSTALLOGRAPHY (1.31 ANGSTROMS) IN COMPLEX WITH MG(2+)</scope>
    <scope>FUNCTION</scope>
    <scope>SUBUNIT</scope>
    <scope>MUTAGENESIS OF ARG-30; GLN-33; TYR-34 AND ARG-39</scope>
</reference>
<reference evidence="5" key="4">
    <citation type="journal article" date="2021" name="J. Struct. Biol.">
        <title>Crystal structure of the anti-CRISPR repressor Aca2.</title>
        <authorList>
            <person name="Usher B."/>
            <person name="Birkholz N."/>
            <person name="Beck I.N."/>
            <person name="Fagerlund R.D."/>
            <person name="Jackson S.A."/>
            <person name="Fineran P.C."/>
            <person name="Blower T.R."/>
        </authorList>
    </citation>
    <scope>X-RAY CRYSTALLOGRAPHY (1.34 ANGSTROMS) OF 2-116</scope>
    <scope>DOMAIN</scope>
    <scope>SUBUNIT</scope>
</reference>
<reference evidence="8" key="5">
    <citation type="journal article" date="2024" name="Nature">
        <title>Phage anti-CRISPR control by an RNA- and DNA-binding helix-turn-helix protein.</title>
        <authorList>
            <person name="Birkholz N."/>
            <person name="Kamata K."/>
            <person name="Feussner M."/>
            <person name="Wilkinson M.E."/>
            <person name="Cuba Samaniego C."/>
            <person name="Migur A."/>
            <person name="Kimanius D."/>
            <person name="Ceelen M."/>
            <person name="Went S.C."/>
            <person name="Usher B."/>
            <person name="Blower T.R."/>
            <person name="Brown C.M."/>
            <person name="Beisel C.L."/>
            <person name="Weinberg Z."/>
            <person name="Fagerlund R.D."/>
            <person name="Jackson S.A."/>
            <person name="Fineran P.C."/>
        </authorList>
    </citation>
    <scope>STRUCTURE BY ELECTRON MICROSCOPY (2.79 ANGSTROMS) OF 1-116</scope>
    <scope>FUNCTION</scope>
    <scope>DOMAIN</scope>
    <scope>MUTAGENESIS OF ARG-30 AND ASP-45</scope>
    <scope>DNA-BINDING</scope>
    <scope>RNA-BINDING</scope>
</reference>
<name>ACA2_BPZF4</name>
<feature type="chain" id="PRO_0000461778" description="Aca2 repressor">
    <location>
        <begin position="1"/>
        <end position="116"/>
    </location>
</feature>
<feature type="binding site" evidence="4">
    <location>
        <position position="34"/>
    </location>
    <ligand>
        <name>DNA</name>
        <dbReference type="ChEBI" id="CHEBI:16991"/>
    </ligand>
</feature>
<feature type="binding site" evidence="6">
    <location>
        <position position="92"/>
    </location>
    <ligand>
        <name>Mg(2+)</name>
        <dbReference type="ChEBI" id="CHEBI:18420"/>
    </ligand>
</feature>
<feature type="mutagenesis site" description="Loss of regulation by Aca2 at both the transcription and traduction levels." evidence="3 4">
    <original>R</original>
    <variation>A</variation>
    <location>
        <position position="30"/>
    </location>
</feature>
<feature type="mutagenesis site" description="Loss of regulation by Aca2 at the transcription level." evidence="3">
    <original>Q</original>
    <variation>A</variation>
    <location>
        <position position="33"/>
    </location>
</feature>
<feature type="mutagenesis site" description="Loss of regulation by Aca2 at the transcription level." evidence="3">
    <original>Y</original>
    <variation>A</variation>
    <location>
        <position position="34"/>
    </location>
</feature>
<feature type="mutagenesis site" description="Loss of regulation by Aca2 at the transcription level." evidence="3">
    <original>R</original>
    <variation>A</variation>
    <location>
        <position position="39"/>
    </location>
</feature>
<feature type="mutagenesis site" description="Specifically abrogates RNA-mediated translational repression; no effect on transcriptional (DNA-based) repression." evidence="4">
    <original>D</original>
    <variation>A</variation>
    <location>
        <position position="45"/>
    </location>
</feature>
<feature type="helix" evidence="9">
    <location>
        <begin position="3"/>
        <end position="12"/>
    </location>
</feature>
<feature type="helix" evidence="9">
    <location>
        <begin position="17"/>
        <end position="23"/>
    </location>
</feature>
<feature type="helix" evidence="9">
    <location>
        <begin position="29"/>
        <end position="37"/>
    </location>
</feature>
<feature type="strand" evidence="9">
    <location>
        <begin position="38"/>
        <end position="40"/>
    </location>
</feature>
<feature type="helix" evidence="9">
    <location>
        <begin position="44"/>
        <end position="69"/>
    </location>
</feature>
<feature type="strand" evidence="9">
    <location>
        <begin position="75"/>
        <end position="77"/>
    </location>
</feature>
<feature type="helix" evidence="9">
    <location>
        <begin position="82"/>
        <end position="88"/>
    </location>
</feature>
<feature type="helix" evidence="9">
    <location>
        <begin position="94"/>
        <end position="109"/>
    </location>
</feature>
<feature type="strand" evidence="9">
    <location>
        <begin position="114"/>
        <end position="116"/>
    </location>
</feature>
<sequence>MTNKELQAIRKLLMLDVSEAAEHIGRVSARSWQYWESGRSAVPDDVEQEMLDLASVRIEMMSAIDKRLADGERPKLRFYNKLDEYLADNPDHNVIGWRLSQSVAALYYTEGHADLI</sequence>
<evidence type="ECO:0000269" key="1">
    <source>
    </source>
</evidence>
<evidence type="ECO:0000269" key="2">
    <source>
    </source>
</evidence>
<evidence type="ECO:0000269" key="3">
    <source>
    </source>
</evidence>
<evidence type="ECO:0000269" key="4">
    <source>
    </source>
</evidence>
<evidence type="ECO:0007744" key="5">
    <source>
        <dbReference type="PDB" id="7B5J"/>
    </source>
</evidence>
<evidence type="ECO:0007744" key="6">
    <source>
        <dbReference type="PDB" id="7VJO"/>
    </source>
</evidence>
<evidence type="ECO:0007744" key="7">
    <source>
        <dbReference type="PDB" id="7VJP"/>
    </source>
</evidence>
<evidence type="ECO:0007744" key="8">
    <source>
        <dbReference type="PDB" id="7VJQ"/>
    </source>
</evidence>
<evidence type="ECO:0007829" key="9">
    <source>
        <dbReference type="PDB" id="7VJO"/>
    </source>
</evidence>
<accession>H9C180</accession>
<gene>
    <name type="ORF">ZF40_0030</name>
</gene>
<keyword id="KW-0002">3D-structure</keyword>
<keyword id="KW-0238">DNA-binding</keyword>
<keyword id="KW-0479">Metal-binding</keyword>
<keyword id="KW-1185">Reference proteome</keyword>
<keyword id="KW-0678">Repressor</keyword>
<keyword id="KW-0694">RNA-binding</keyword>
<organism>
    <name type="scientific">Pectobacterium phage ZF40</name>
    <name type="common">Bacteriophage ZF40</name>
    <dbReference type="NCBI Taxonomy" id="1127516"/>
    <lineage>
        <taxon>Viruses</taxon>
        <taxon>Duplodnaviria</taxon>
        <taxon>Heunggongvirae</taxon>
        <taxon>Uroviricota</taxon>
        <taxon>Caudoviricetes</taxon>
    </lineage>
</organism>
<proteinExistence type="evidence at protein level"/>
<comment type="function">
    <text evidence="1 3 4">Represses the expression of the acrIF8-aca2 operon (PubMed:31428783, PubMed:34756887, PubMed:38987591). Regulates the transcription and translation of phage anti-CRISPR acrIF8 gene (AC H9C181), which is necessary because the expression of this gene rises rapidely upon infection to enable evasion from host CRISPR-Cas defense but is probably toxic to the host cell (PubMed:38987591). Aca2 repressor can inhibit acrIF8 transcriptionally through DNA binding to 2 inverted repeats in the promoter region and translationally by binding conserved RNA stem-loops on mRNAs thereby blocking ribosome access (PubMed:31428783, PubMed:38987591). Both modes of regulation together are essential for complete tight repression (PubMed:38987591).</text>
</comment>
<comment type="subunit">
    <text evidence="1 2 3">Homodimer.</text>
</comment>
<comment type="domain">
    <text evidence="1 2 4">The N-terminus HTH domain is involved in DNA binding and inhibition of transcription (PubMed:31428783, PubMed:34116143, PubMed:38987591). The C-terminus is involved in dimerization (PubMed:34116143).</text>
</comment>